<accession>A9R2Y9</accession>
<evidence type="ECO:0000255" key="1">
    <source>
        <dbReference type="HAMAP-Rule" id="MF_00067"/>
    </source>
</evidence>
<reference key="1">
    <citation type="journal article" date="2010" name="J. Bacteriol.">
        <title>Genome sequence of the deep-rooted Yersinia pestis strain Angola reveals new insights into the evolution and pangenome of the plague bacterium.</title>
        <authorList>
            <person name="Eppinger M."/>
            <person name="Worsham P.L."/>
            <person name="Nikolich M.P."/>
            <person name="Riley D.R."/>
            <person name="Sebastian Y."/>
            <person name="Mou S."/>
            <person name="Achtman M."/>
            <person name="Lindler L.E."/>
            <person name="Ravel J."/>
        </authorList>
    </citation>
    <scope>NUCLEOTIDE SEQUENCE [LARGE SCALE GENOMIC DNA]</scope>
    <source>
        <strain>Angola</strain>
    </source>
</reference>
<dbReference type="EC" id="5.3.1.28" evidence="1"/>
<dbReference type="EMBL" id="CP000901">
    <property type="protein sequence ID" value="ABX85597.1"/>
    <property type="molecule type" value="Genomic_DNA"/>
</dbReference>
<dbReference type="SMR" id="A9R2Y9"/>
<dbReference type="KEGG" id="ypg:YpAngola_A3320"/>
<dbReference type="PATRIC" id="fig|349746.12.peg.19"/>
<dbReference type="UniPathway" id="UPA00041">
    <property type="reaction ID" value="UER00436"/>
</dbReference>
<dbReference type="GO" id="GO:0005737">
    <property type="term" value="C:cytoplasm"/>
    <property type="evidence" value="ECO:0007669"/>
    <property type="project" value="UniProtKB-SubCell"/>
</dbReference>
<dbReference type="GO" id="GO:0097367">
    <property type="term" value="F:carbohydrate derivative binding"/>
    <property type="evidence" value="ECO:0007669"/>
    <property type="project" value="InterPro"/>
</dbReference>
<dbReference type="GO" id="GO:0008968">
    <property type="term" value="F:D-sedoheptulose 7-phosphate isomerase activity"/>
    <property type="evidence" value="ECO:0007669"/>
    <property type="project" value="UniProtKB-UniRule"/>
</dbReference>
<dbReference type="GO" id="GO:0008270">
    <property type="term" value="F:zinc ion binding"/>
    <property type="evidence" value="ECO:0007669"/>
    <property type="project" value="UniProtKB-UniRule"/>
</dbReference>
<dbReference type="GO" id="GO:0005975">
    <property type="term" value="P:carbohydrate metabolic process"/>
    <property type="evidence" value="ECO:0007669"/>
    <property type="project" value="UniProtKB-UniRule"/>
</dbReference>
<dbReference type="GO" id="GO:2001061">
    <property type="term" value="P:D-glycero-D-manno-heptose 7-phosphate biosynthetic process"/>
    <property type="evidence" value="ECO:0007669"/>
    <property type="project" value="UniProtKB-UniPathway"/>
</dbReference>
<dbReference type="CDD" id="cd05006">
    <property type="entry name" value="SIS_GmhA"/>
    <property type="match status" value="1"/>
</dbReference>
<dbReference type="FunFam" id="3.40.50.10490:FF:000013">
    <property type="entry name" value="Phosphoheptose isomerase"/>
    <property type="match status" value="1"/>
</dbReference>
<dbReference type="Gene3D" id="3.40.50.10490">
    <property type="entry name" value="Glucose-6-phosphate isomerase like protein, domain 1"/>
    <property type="match status" value="1"/>
</dbReference>
<dbReference type="HAMAP" id="MF_00067">
    <property type="entry name" value="GmhA"/>
    <property type="match status" value="1"/>
</dbReference>
<dbReference type="InterPro" id="IPR035461">
    <property type="entry name" value="GmhA/DiaA"/>
</dbReference>
<dbReference type="InterPro" id="IPR004515">
    <property type="entry name" value="Phosphoheptose_Isoase"/>
</dbReference>
<dbReference type="InterPro" id="IPR001347">
    <property type="entry name" value="SIS_dom"/>
</dbReference>
<dbReference type="InterPro" id="IPR046348">
    <property type="entry name" value="SIS_dom_sf"/>
</dbReference>
<dbReference type="InterPro" id="IPR050099">
    <property type="entry name" value="SIS_GmhA/DiaA_subfam"/>
</dbReference>
<dbReference type="NCBIfam" id="TIGR00441">
    <property type="entry name" value="gmhA"/>
    <property type="match status" value="1"/>
</dbReference>
<dbReference type="NCBIfam" id="NF001628">
    <property type="entry name" value="PRK00414.1"/>
    <property type="match status" value="1"/>
</dbReference>
<dbReference type="PANTHER" id="PTHR30390:SF7">
    <property type="entry name" value="PHOSPHOHEPTOSE ISOMERASE"/>
    <property type="match status" value="1"/>
</dbReference>
<dbReference type="PANTHER" id="PTHR30390">
    <property type="entry name" value="SEDOHEPTULOSE 7-PHOSPHATE ISOMERASE / DNAA INITIATOR-ASSOCIATING FACTOR FOR REPLICATION INITIATION"/>
    <property type="match status" value="1"/>
</dbReference>
<dbReference type="Pfam" id="PF13580">
    <property type="entry name" value="SIS_2"/>
    <property type="match status" value="1"/>
</dbReference>
<dbReference type="SUPFAM" id="SSF53697">
    <property type="entry name" value="SIS domain"/>
    <property type="match status" value="1"/>
</dbReference>
<dbReference type="PROSITE" id="PS51464">
    <property type="entry name" value="SIS"/>
    <property type="match status" value="1"/>
</dbReference>
<keyword id="KW-0119">Carbohydrate metabolism</keyword>
<keyword id="KW-0963">Cytoplasm</keyword>
<keyword id="KW-0413">Isomerase</keyword>
<keyword id="KW-0479">Metal-binding</keyword>
<keyword id="KW-0862">Zinc</keyword>
<feature type="chain" id="PRO_1000092296" description="Phosphoheptose isomerase">
    <location>
        <begin position="1"/>
        <end position="193"/>
    </location>
</feature>
<feature type="domain" description="SIS" evidence="1">
    <location>
        <begin position="37"/>
        <end position="193"/>
    </location>
</feature>
<feature type="binding site" evidence="1">
    <location>
        <begin position="52"/>
        <end position="54"/>
    </location>
    <ligand>
        <name>substrate</name>
    </ligand>
</feature>
<feature type="binding site" evidence="1">
    <location>
        <position position="61"/>
    </location>
    <ligand>
        <name>Zn(2+)</name>
        <dbReference type="ChEBI" id="CHEBI:29105"/>
    </ligand>
</feature>
<feature type="binding site" evidence="1">
    <location>
        <position position="65"/>
    </location>
    <ligand>
        <name>substrate</name>
    </ligand>
</feature>
<feature type="binding site" evidence="1">
    <location>
        <position position="65"/>
    </location>
    <ligand>
        <name>Zn(2+)</name>
        <dbReference type="ChEBI" id="CHEBI:29105"/>
    </ligand>
</feature>
<feature type="binding site" evidence="1">
    <location>
        <begin position="93"/>
        <end position="94"/>
    </location>
    <ligand>
        <name>substrate</name>
    </ligand>
</feature>
<feature type="binding site" evidence="1">
    <location>
        <begin position="119"/>
        <end position="121"/>
    </location>
    <ligand>
        <name>substrate</name>
    </ligand>
</feature>
<feature type="binding site" evidence="1">
    <location>
        <position position="124"/>
    </location>
    <ligand>
        <name>substrate</name>
    </ligand>
</feature>
<feature type="binding site" evidence="1">
    <location>
        <position position="172"/>
    </location>
    <ligand>
        <name>substrate</name>
    </ligand>
</feature>
<feature type="binding site" evidence="1">
    <location>
        <position position="172"/>
    </location>
    <ligand>
        <name>Zn(2+)</name>
        <dbReference type="ChEBI" id="CHEBI:29105"/>
    </ligand>
</feature>
<feature type="binding site" evidence="1">
    <location>
        <position position="180"/>
    </location>
    <ligand>
        <name>Zn(2+)</name>
        <dbReference type="ChEBI" id="CHEBI:29105"/>
    </ligand>
</feature>
<proteinExistence type="inferred from homology"/>
<gene>
    <name evidence="1" type="primary">gmhA</name>
    <name type="ordered locus">YpAngola_A3320</name>
</gene>
<organism>
    <name type="scientific">Yersinia pestis bv. Antiqua (strain Angola)</name>
    <dbReference type="NCBI Taxonomy" id="349746"/>
    <lineage>
        <taxon>Bacteria</taxon>
        <taxon>Pseudomonadati</taxon>
        <taxon>Pseudomonadota</taxon>
        <taxon>Gammaproteobacteria</taxon>
        <taxon>Enterobacterales</taxon>
        <taxon>Yersiniaceae</taxon>
        <taxon>Yersinia</taxon>
    </lineage>
</organism>
<sequence>MYHDLIRSELNEAADTLANFLKDDSNIDAIQRAAILLADSFKAGGKVLSCGNGGSHCDAMHFAEELTGRYRENRPGYPAIAISDVSHLSCVSNDFGYDYVFSRYVEAVGREGDVLLGISTSGNSGNIIKAIEAARAKGMKVITLTGKDGGKMAGSADIEIRVPHFGYADRIQEIHIKVIHILIQLIEKEMVKA</sequence>
<protein>
    <recommendedName>
        <fullName evidence="1">Phosphoheptose isomerase</fullName>
        <ecNumber evidence="1">5.3.1.28</ecNumber>
    </recommendedName>
    <alternativeName>
        <fullName evidence="1">Sedoheptulose 7-phosphate isomerase</fullName>
    </alternativeName>
</protein>
<name>GMHA_YERPG</name>
<comment type="function">
    <text evidence="1">Catalyzes the isomerization of sedoheptulose 7-phosphate in D-glycero-D-manno-heptose 7-phosphate.</text>
</comment>
<comment type="catalytic activity">
    <reaction evidence="1">
        <text>2 D-sedoheptulose 7-phosphate = D-glycero-alpha-D-manno-heptose 7-phosphate + D-glycero-beta-D-manno-heptose 7-phosphate</text>
        <dbReference type="Rhea" id="RHEA:27489"/>
        <dbReference type="ChEBI" id="CHEBI:57483"/>
        <dbReference type="ChEBI" id="CHEBI:60203"/>
        <dbReference type="ChEBI" id="CHEBI:60204"/>
        <dbReference type="EC" id="5.3.1.28"/>
    </reaction>
</comment>
<comment type="cofactor">
    <cofactor evidence="1">
        <name>Zn(2+)</name>
        <dbReference type="ChEBI" id="CHEBI:29105"/>
    </cofactor>
    <text evidence="1">Binds 1 zinc ion per subunit.</text>
</comment>
<comment type="pathway">
    <text evidence="1">Carbohydrate biosynthesis; D-glycero-D-manno-heptose 7-phosphate biosynthesis; D-glycero-alpha-D-manno-heptose 7-phosphate and D-glycero-beta-D-manno-heptose 7-phosphate from sedoheptulose 7-phosphate: step 1/1.</text>
</comment>
<comment type="subunit">
    <text evidence="1">Homotetramer.</text>
</comment>
<comment type="subcellular location">
    <subcellularLocation>
        <location evidence="1">Cytoplasm</location>
    </subcellularLocation>
</comment>
<comment type="miscellaneous">
    <text evidence="1">The reaction produces a racemic mixture of D-glycero-alpha-D-manno-heptose 7-phosphate and D-glycero-beta-D-manno-heptose 7-phosphate.</text>
</comment>
<comment type="similarity">
    <text evidence="1">Belongs to the SIS family. GmhA subfamily.</text>
</comment>